<name>LIPB_LARHH</name>
<evidence type="ECO:0000255" key="1">
    <source>
        <dbReference type="HAMAP-Rule" id="MF_00013"/>
    </source>
</evidence>
<evidence type="ECO:0000255" key="2">
    <source>
        <dbReference type="PROSITE-ProRule" id="PRU01067"/>
    </source>
</evidence>
<feature type="chain" id="PRO_1000116548" description="Octanoyltransferase">
    <location>
        <begin position="1"/>
        <end position="207"/>
    </location>
</feature>
<feature type="domain" description="BPL/LPL catalytic" evidence="2">
    <location>
        <begin position="27"/>
        <end position="202"/>
    </location>
</feature>
<feature type="active site" description="Acyl-thioester intermediate" evidence="1">
    <location>
        <position position="164"/>
    </location>
</feature>
<feature type="binding site" evidence="1">
    <location>
        <begin position="66"/>
        <end position="73"/>
    </location>
    <ligand>
        <name>substrate</name>
    </ligand>
</feature>
<feature type="binding site" evidence="1">
    <location>
        <begin position="133"/>
        <end position="135"/>
    </location>
    <ligand>
        <name>substrate</name>
    </ligand>
</feature>
<feature type="binding site" evidence="1">
    <location>
        <begin position="146"/>
        <end position="148"/>
    </location>
    <ligand>
        <name>substrate</name>
    </ligand>
</feature>
<feature type="site" description="Lowers pKa of active site Cys" evidence="1">
    <location>
        <position position="130"/>
    </location>
</feature>
<dbReference type="EC" id="2.3.1.181" evidence="1"/>
<dbReference type="EMBL" id="CP001154">
    <property type="protein sequence ID" value="ACO73965.1"/>
    <property type="molecule type" value="Genomic_DNA"/>
</dbReference>
<dbReference type="RefSeq" id="WP_012696456.1">
    <property type="nucleotide sequence ID" value="NC_012559.1"/>
</dbReference>
<dbReference type="SMR" id="C1D5T4"/>
<dbReference type="STRING" id="557598.LHK_00973"/>
<dbReference type="GeneID" id="75109159"/>
<dbReference type="KEGG" id="lhk:LHK_00973"/>
<dbReference type="eggNOG" id="COG0321">
    <property type="taxonomic scope" value="Bacteria"/>
</dbReference>
<dbReference type="HOGENOM" id="CLU_035168_3_1_4"/>
<dbReference type="UniPathway" id="UPA00538">
    <property type="reaction ID" value="UER00592"/>
</dbReference>
<dbReference type="Proteomes" id="UP000002010">
    <property type="component" value="Chromosome"/>
</dbReference>
<dbReference type="GO" id="GO:0005737">
    <property type="term" value="C:cytoplasm"/>
    <property type="evidence" value="ECO:0007669"/>
    <property type="project" value="UniProtKB-SubCell"/>
</dbReference>
<dbReference type="GO" id="GO:0033819">
    <property type="term" value="F:lipoyl(octanoyl) transferase activity"/>
    <property type="evidence" value="ECO:0007669"/>
    <property type="project" value="UniProtKB-EC"/>
</dbReference>
<dbReference type="GO" id="GO:0036211">
    <property type="term" value="P:protein modification process"/>
    <property type="evidence" value="ECO:0007669"/>
    <property type="project" value="InterPro"/>
</dbReference>
<dbReference type="CDD" id="cd16444">
    <property type="entry name" value="LipB"/>
    <property type="match status" value="1"/>
</dbReference>
<dbReference type="FunFam" id="3.30.930.10:FF:000020">
    <property type="entry name" value="Octanoyltransferase"/>
    <property type="match status" value="1"/>
</dbReference>
<dbReference type="Gene3D" id="3.30.930.10">
    <property type="entry name" value="Bira Bifunctional Protein, Domain 2"/>
    <property type="match status" value="1"/>
</dbReference>
<dbReference type="HAMAP" id="MF_00013">
    <property type="entry name" value="LipB"/>
    <property type="match status" value="1"/>
</dbReference>
<dbReference type="InterPro" id="IPR045864">
    <property type="entry name" value="aa-tRNA-synth_II/BPL/LPL"/>
</dbReference>
<dbReference type="InterPro" id="IPR004143">
    <property type="entry name" value="BPL_LPL_catalytic"/>
</dbReference>
<dbReference type="InterPro" id="IPR000544">
    <property type="entry name" value="Octanoyltransferase"/>
</dbReference>
<dbReference type="InterPro" id="IPR020605">
    <property type="entry name" value="Octanoyltransferase_CS"/>
</dbReference>
<dbReference type="NCBIfam" id="TIGR00214">
    <property type="entry name" value="lipB"/>
    <property type="match status" value="1"/>
</dbReference>
<dbReference type="NCBIfam" id="NF010922">
    <property type="entry name" value="PRK14342.1"/>
    <property type="match status" value="1"/>
</dbReference>
<dbReference type="NCBIfam" id="NF010923">
    <property type="entry name" value="PRK14343.1"/>
    <property type="match status" value="1"/>
</dbReference>
<dbReference type="NCBIfam" id="NF010925">
    <property type="entry name" value="PRK14345.1"/>
    <property type="match status" value="1"/>
</dbReference>
<dbReference type="PANTHER" id="PTHR10993:SF7">
    <property type="entry name" value="LIPOYLTRANSFERASE 2, MITOCHONDRIAL-RELATED"/>
    <property type="match status" value="1"/>
</dbReference>
<dbReference type="PANTHER" id="PTHR10993">
    <property type="entry name" value="OCTANOYLTRANSFERASE"/>
    <property type="match status" value="1"/>
</dbReference>
<dbReference type="Pfam" id="PF21948">
    <property type="entry name" value="LplA-B_cat"/>
    <property type="match status" value="1"/>
</dbReference>
<dbReference type="PIRSF" id="PIRSF016262">
    <property type="entry name" value="LPLase"/>
    <property type="match status" value="1"/>
</dbReference>
<dbReference type="SUPFAM" id="SSF55681">
    <property type="entry name" value="Class II aaRS and biotin synthetases"/>
    <property type="match status" value="1"/>
</dbReference>
<dbReference type="PROSITE" id="PS51733">
    <property type="entry name" value="BPL_LPL_CATALYTIC"/>
    <property type="match status" value="1"/>
</dbReference>
<dbReference type="PROSITE" id="PS01313">
    <property type="entry name" value="LIPB"/>
    <property type="match status" value="1"/>
</dbReference>
<gene>
    <name evidence="1" type="primary">lipB</name>
    <name type="ordered locus">LHK_00973</name>
</gene>
<organism>
    <name type="scientific">Laribacter hongkongensis (strain HLHK9)</name>
    <dbReference type="NCBI Taxonomy" id="557598"/>
    <lineage>
        <taxon>Bacteria</taxon>
        <taxon>Pseudomonadati</taxon>
        <taxon>Pseudomonadota</taxon>
        <taxon>Betaproteobacteria</taxon>
        <taxon>Neisseriales</taxon>
        <taxon>Aquaspirillaceae</taxon>
        <taxon>Laribacter</taxon>
    </lineage>
</organism>
<accession>C1D5T4</accession>
<protein>
    <recommendedName>
        <fullName evidence="1">Octanoyltransferase</fullName>
        <ecNumber evidence="1">2.3.1.181</ecNumber>
    </recommendedName>
    <alternativeName>
        <fullName evidence="1">Lipoate-protein ligase B</fullName>
    </alternativeName>
    <alternativeName>
        <fullName evidence="1">Lipoyl/octanoyl transferase</fullName>
    </alternativeName>
    <alternativeName>
        <fullName evidence="1">Octanoyl-[acyl-carrier-protein]-protein N-octanoyltransferase</fullName>
    </alternativeName>
</protein>
<reference key="1">
    <citation type="journal article" date="2009" name="PLoS Genet.">
        <title>The complete genome and proteome of Laribacter hongkongensis reveal potential mechanisms for adaptations to different temperatures and habitats.</title>
        <authorList>
            <person name="Woo P.C.Y."/>
            <person name="Lau S.K.P."/>
            <person name="Tse H."/>
            <person name="Teng J.L.L."/>
            <person name="Curreem S.O."/>
            <person name="Tsang A.K.L."/>
            <person name="Fan R.Y.Y."/>
            <person name="Wong G.K.M."/>
            <person name="Huang Y."/>
            <person name="Loman N.J."/>
            <person name="Snyder L.A.S."/>
            <person name="Cai J.J."/>
            <person name="Huang J.-D."/>
            <person name="Mak W."/>
            <person name="Pallen M.J."/>
            <person name="Lok S."/>
            <person name="Yuen K.-Y."/>
        </authorList>
    </citation>
    <scope>NUCLEOTIDE SEQUENCE [LARGE SCALE GENOMIC DNA]</scope>
    <source>
        <strain>HLHK9</strain>
    </source>
</reference>
<comment type="function">
    <text evidence="1">Catalyzes the transfer of endogenously produced octanoic acid from octanoyl-acyl-carrier-protein onto the lipoyl domains of lipoate-dependent enzymes. Lipoyl-ACP can also act as a substrate although octanoyl-ACP is likely to be the physiological substrate.</text>
</comment>
<comment type="catalytic activity">
    <reaction evidence="1">
        <text>octanoyl-[ACP] + L-lysyl-[protein] = N(6)-octanoyl-L-lysyl-[protein] + holo-[ACP] + H(+)</text>
        <dbReference type="Rhea" id="RHEA:17665"/>
        <dbReference type="Rhea" id="RHEA-COMP:9636"/>
        <dbReference type="Rhea" id="RHEA-COMP:9685"/>
        <dbReference type="Rhea" id="RHEA-COMP:9752"/>
        <dbReference type="Rhea" id="RHEA-COMP:9928"/>
        <dbReference type="ChEBI" id="CHEBI:15378"/>
        <dbReference type="ChEBI" id="CHEBI:29969"/>
        <dbReference type="ChEBI" id="CHEBI:64479"/>
        <dbReference type="ChEBI" id="CHEBI:78463"/>
        <dbReference type="ChEBI" id="CHEBI:78809"/>
        <dbReference type="EC" id="2.3.1.181"/>
    </reaction>
</comment>
<comment type="pathway">
    <text evidence="1">Protein modification; protein lipoylation via endogenous pathway; protein N(6)-(lipoyl)lysine from octanoyl-[acyl-carrier-protein]: step 1/2.</text>
</comment>
<comment type="subcellular location">
    <subcellularLocation>
        <location evidence="1">Cytoplasm</location>
    </subcellularLocation>
</comment>
<comment type="miscellaneous">
    <text evidence="1">In the reaction, the free carboxyl group of octanoic acid is attached via an amide linkage to the epsilon-amino group of a specific lysine residue of lipoyl domains of lipoate-dependent enzymes.</text>
</comment>
<comment type="similarity">
    <text evidence="1">Belongs to the LipB family.</text>
</comment>
<sequence>MHIRHLGLVDYEPTWHAMQAFTETRTGETPDELWIVEHPPVYTLGLAGKPEHLLQQTAIPLVKTDRGGQITYHGPGQLVVYLLMDLRRRDYGVRDMVRRIEQAIIDTLADYGIEARGDVNAPGVYVGARKIASLGLRIKNHATYHGLSLNVSMDLAPFGWINPCGYAGLEVTRMTDLGVEATLAQVAERLIPHLETRLARPQHETEA</sequence>
<proteinExistence type="inferred from homology"/>
<keyword id="KW-0012">Acyltransferase</keyword>
<keyword id="KW-0963">Cytoplasm</keyword>
<keyword id="KW-1185">Reference proteome</keyword>
<keyword id="KW-0808">Transferase</keyword>